<feature type="chain" id="PRO_0000381201" description="Biotin synthase">
    <location>
        <begin position="1"/>
        <end position="361"/>
    </location>
</feature>
<feature type="domain" description="Radical SAM core" evidence="2">
    <location>
        <begin position="47"/>
        <end position="278"/>
    </location>
</feature>
<feature type="region of interest" description="Disordered" evidence="3">
    <location>
        <begin position="323"/>
        <end position="361"/>
    </location>
</feature>
<feature type="compositionally biased region" description="Basic and acidic residues" evidence="3">
    <location>
        <begin position="339"/>
        <end position="354"/>
    </location>
</feature>
<feature type="binding site" evidence="1">
    <location>
        <position position="65"/>
    </location>
    <ligand>
        <name>[4Fe-4S] cluster</name>
        <dbReference type="ChEBI" id="CHEBI:49883"/>
        <note>4Fe-4S-S-AdoMet</note>
    </ligand>
</feature>
<feature type="binding site" evidence="1">
    <location>
        <position position="69"/>
    </location>
    <ligand>
        <name>[4Fe-4S] cluster</name>
        <dbReference type="ChEBI" id="CHEBI:49883"/>
        <note>4Fe-4S-S-AdoMet</note>
    </ligand>
</feature>
<feature type="binding site" evidence="1">
    <location>
        <position position="72"/>
    </location>
    <ligand>
        <name>[4Fe-4S] cluster</name>
        <dbReference type="ChEBI" id="CHEBI:49883"/>
        <note>4Fe-4S-S-AdoMet</note>
    </ligand>
</feature>
<feature type="binding site" evidence="1">
    <location>
        <position position="110"/>
    </location>
    <ligand>
        <name>[2Fe-2S] cluster</name>
        <dbReference type="ChEBI" id="CHEBI:190135"/>
    </ligand>
</feature>
<feature type="binding site" evidence="1">
    <location>
        <position position="143"/>
    </location>
    <ligand>
        <name>[2Fe-2S] cluster</name>
        <dbReference type="ChEBI" id="CHEBI:190135"/>
    </ligand>
</feature>
<feature type="binding site" evidence="1">
    <location>
        <position position="203"/>
    </location>
    <ligand>
        <name>[2Fe-2S] cluster</name>
        <dbReference type="ChEBI" id="CHEBI:190135"/>
    </ligand>
</feature>
<comment type="function">
    <text evidence="1">Catalyzes the conversion of dethiobiotin (DTB) to biotin by the insertion of a sulfur atom into dethiobiotin via a radical-based mechanism.</text>
</comment>
<comment type="catalytic activity">
    <reaction evidence="1">
        <text>(4R,5S)-dethiobiotin + (sulfur carrier)-SH + 2 reduced [2Fe-2S]-[ferredoxin] + 2 S-adenosyl-L-methionine = (sulfur carrier)-H + biotin + 2 5'-deoxyadenosine + 2 L-methionine + 2 oxidized [2Fe-2S]-[ferredoxin]</text>
        <dbReference type="Rhea" id="RHEA:22060"/>
        <dbReference type="Rhea" id="RHEA-COMP:10000"/>
        <dbReference type="Rhea" id="RHEA-COMP:10001"/>
        <dbReference type="Rhea" id="RHEA-COMP:14737"/>
        <dbReference type="Rhea" id="RHEA-COMP:14739"/>
        <dbReference type="ChEBI" id="CHEBI:17319"/>
        <dbReference type="ChEBI" id="CHEBI:29917"/>
        <dbReference type="ChEBI" id="CHEBI:33737"/>
        <dbReference type="ChEBI" id="CHEBI:33738"/>
        <dbReference type="ChEBI" id="CHEBI:57586"/>
        <dbReference type="ChEBI" id="CHEBI:57844"/>
        <dbReference type="ChEBI" id="CHEBI:59789"/>
        <dbReference type="ChEBI" id="CHEBI:64428"/>
        <dbReference type="ChEBI" id="CHEBI:149473"/>
        <dbReference type="EC" id="2.8.1.6"/>
    </reaction>
</comment>
<comment type="cofactor">
    <cofactor evidence="1">
        <name>[4Fe-4S] cluster</name>
        <dbReference type="ChEBI" id="CHEBI:49883"/>
    </cofactor>
    <text evidence="1">Binds 1 [4Fe-4S] cluster. The cluster is coordinated with 3 cysteines and an exchangeable S-adenosyl-L-methionine.</text>
</comment>
<comment type="cofactor">
    <cofactor evidence="1">
        <name>[2Fe-2S] cluster</name>
        <dbReference type="ChEBI" id="CHEBI:190135"/>
    </cofactor>
    <text evidence="1">Binds 1 [2Fe-2S] cluster. The cluster is coordinated with 3 cysteines and 1 arginine.</text>
</comment>
<comment type="pathway">
    <text evidence="1">Cofactor biosynthesis; biotin biosynthesis; biotin from 7,8-diaminononanoate: step 2/2.</text>
</comment>
<comment type="subunit">
    <text evidence="1">Homodimer.</text>
</comment>
<comment type="similarity">
    <text evidence="1">Belongs to the radical SAM superfamily. Biotin synthase family.</text>
</comment>
<gene>
    <name evidence="1" type="primary">bioB</name>
    <name type="ordered locus">AnaeK_3535</name>
</gene>
<evidence type="ECO:0000255" key="1">
    <source>
        <dbReference type="HAMAP-Rule" id="MF_01694"/>
    </source>
</evidence>
<evidence type="ECO:0000255" key="2">
    <source>
        <dbReference type="PROSITE-ProRule" id="PRU01266"/>
    </source>
</evidence>
<evidence type="ECO:0000256" key="3">
    <source>
        <dbReference type="SAM" id="MobiDB-lite"/>
    </source>
</evidence>
<accession>B4UCB2</accession>
<reference key="1">
    <citation type="submission" date="2008-08" db="EMBL/GenBank/DDBJ databases">
        <title>Complete sequence of Anaeromyxobacter sp. K.</title>
        <authorList>
            <consortium name="US DOE Joint Genome Institute"/>
            <person name="Lucas S."/>
            <person name="Copeland A."/>
            <person name="Lapidus A."/>
            <person name="Glavina del Rio T."/>
            <person name="Dalin E."/>
            <person name="Tice H."/>
            <person name="Bruce D."/>
            <person name="Goodwin L."/>
            <person name="Pitluck S."/>
            <person name="Saunders E."/>
            <person name="Brettin T."/>
            <person name="Detter J.C."/>
            <person name="Han C."/>
            <person name="Larimer F."/>
            <person name="Land M."/>
            <person name="Hauser L."/>
            <person name="Kyrpides N."/>
            <person name="Ovchinnikiva G."/>
            <person name="Beliaev A."/>
        </authorList>
    </citation>
    <scope>NUCLEOTIDE SEQUENCE [LARGE SCALE GENOMIC DNA]</scope>
    <source>
        <strain>K</strain>
    </source>
</reference>
<protein>
    <recommendedName>
        <fullName evidence="1">Biotin synthase</fullName>
        <ecNumber evidence="1">2.8.1.6</ecNumber>
    </recommendedName>
</protein>
<name>BIOB_ANASK</name>
<sequence length="361" mass="39090">MCETASTTLPPGITPISGDEARRLIHHTSGPELEALLDRAEAVRRAVHGDEVALCGITNAKSGRCPEDCGFCSQSARFEGADAPVYPMIGAGEIVEQAHKAERAGAREFSIVASGTRLAREQELATVEEALRRLRAETAVEPCASLGLMREPELRRLKDAGLMHYHHNLETARSHFENVCTTHTFDEQLETIRAAKGLGLKLCSGGILGMGETPEQRVEFAEEVRDLGVDCVPVNFLNPRAGTPLAHLKAITPEECLAALAVFRLMMPAAHIFVMGGREVNLGDRQDLIFRAGANGTMVGNYLTSAGRAPDLTVGMVERQGLTLRPPDTGKPWAFDGHAPSDADWNRKAAEPRPRPLPVVR</sequence>
<organism>
    <name type="scientific">Anaeromyxobacter sp. (strain K)</name>
    <dbReference type="NCBI Taxonomy" id="447217"/>
    <lineage>
        <taxon>Bacteria</taxon>
        <taxon>Pseudomonadati</taxon>
        <taxon>Myxococcota</taxon>
        <taxon>Myxococcia</taxon>
        <taxon>Myxococcales</taxon>
        <taxon>Cystobacterineae</taxon>
        <taxon>Anaeromyxobacteraceae</taxon>
        <taxon>Anaeromyxobacter</taxon>
    </lineage>
</organism>
<keyword id="KW-0001">2Fe-2S</keyword>
<keyword id="KW-0004">4Fe-4S</keyword>
<keyword id="KW-0093">Biotin biosynthesis</keyword>
<keyword id="KW-0408">Iron</keyword>
<keyword id="KW-0411">Iron-sulfur</keyword>
<keyword id="KW-0479">Metal-binding</keyword>
<keyword id="KW-0949">S-adenosyl-L-methionine</keyword>
<keyword id="KW-0808">Transferase</keyword>
<dbReference type="EC" id="2.8.1.6" evidence="1"/>
<dbReference type="EMBL" id="CP001131">
    <property type="protein sequence ID" value="ACG74748.1"/>
    <property type="molecule type" value="Genomic_DNA"/>
</dbReference>
<dbReference type="RefSeq" id="WP_012527517.1">
    <property type="nucleotide sequence ID" value="NC_011145.1"/>
</dbReference>
<dbReference type="SMR" id="B4UCB2"/>
<dbReference type="KEGG" id="ank:AnaeK_3535"/>
<dbReference type="HOGENOM" id="CLU_033172_2_1_7"/>
<dbReference type="OrthoDB" id="9786826at2"/>
<dbReference type="UniPathway" id="UPA00078">
    <property type="reaction ID" value="UER00162"/>
</dbReference>
<dbReference type="Proteomes" id="UP000001871">
    <property type="component" value="Chromosome"/>
</dbReference>
<dbReference type="GO" id="GO:0051537">
    <property type="term" value="F:2 iron, 2 sulfur cluster binding"/>
    <property type="evidence" value="ECO:0007669"/>
    <property type="project" value="UniProtKB-KW"/>
</dbReference>
<dbReference type="GO" id="GO:0051539">
    <property type="term" value="F:4 iron, 4 sulfur cluster binding"/>
    <property type="evidence" value="ECO:0007669"/>
    <property type="project" value="UniProtKB-KW"/>
</dbReference>
<dbReference type="GO" id="GO:0004076">
    <property type="term" value="F:biotin synthase activity"/>
    <property type="evidence" value="ECO:0007669"/>
    <property type="project" value="UniProtKB-UniRule"/>
</dbReference>
<dbReference type="GO" id="GO:0005506">
    <property type="term" value="F:iron ion binding"/>
    <property type="evidence" value="ECO:0007669"/>
    <property type="project" value="UniProtKB-UniRule"/>
</dbReference>
<dbReference type="GO" id="GO:0009102">
    <property type="term" value="P:biotin biosynthetic process"/>
    <property type="evidence" value="ECO:0007669"/>
    <property type="project" value="UniProtKB-UniRule"/>
</dbReference>
<dbReference type="CDD" id="cd01335">
    <property type="entry name" value="Radical_SAM"/>
    <property type="match status" value="1"/>
</dbReference>
<dbReference type="Gene3D" id="3.20.20.70">
    <property type="entry name" value="Aldolase class I"/>
    <property type="match status" value="1"/>
</dbReference>
<dbReference type="HAMAP" id="MF_01694">
    <property type="entry name" value="BioB"/>
    <property type="match status" value="1"/>
</dbReference>
<dbReference type="InterPro" id="IPR013785">
    <property type="entry name" value="Aldolase_TIM"/>
</dbReference>
<dbReference type="InterPro" id="IPR010722">
    <property type="entry name" value="BATS_dom"/>
</dbReference>
<dbReference type="InterPro" id="IPR002684">
    <property type="entry name" value="Biotin_synth/BioAB"/>
</dbReference>
<dbReference type="InterPro" id="IPR024177">
    <property type="entry name" value="Biotin_synthase"/>
</dbReference>
<dbReference type="InterPro" id="IPR006638">
    <property type="entry name" value="Elp3/MiaA/NifB-like_rSAM"/>
</dbReference>
<dbReference type="InterPro" id="IPR007197">
    <property type="entry name" value="rSAM"/>
</dbReference>
<dbReference type="NCBIfam" id="TIGR00433">
    <property type="entry name" value="bioB"/>
    <property type="match status" value="1"/>
</dbReference>
<dbReference type="PANTHER" id="PTHR22976">
    <property type="entry name" value="BIOTIN SYNTHASE"/>
    <property type="match status" value="1"/>
</dbReference>
<dbReference type="PANTHER" id="PTHR22976:SF2">
    <property type="entry name" value="BIOTIN SYNTHASE, MITOCHONDRIAL"/>
    <property type="match status" value="1"/>
</dbReference>
<dbReference type="Pfam" id="PF06968">
    <property type="entry name" value="BATS"/>
    <property type="match status" value="1"/>
</dbReference>
<dbReference type="Pfam" id="PF04055">
    <property type="entry name" value="Radical_SAM"/>
    <property type="match status" value="1"/>
</dbReference>
<dbReference type="PIRSF" id="PIRSF001619">
    <property type="entry name" value="Biotin_synth"/>
    <property type="match status" value="1"/>
</dbReference>
<dbReference type="SFLD" id="SFLDG01060">
    <property type="entry name" value="BATS_domain_containing"/>
    <property type="match status" value="1"/>
</dbReference>
<dbReference type="SFLD" id="SFLDG01278">
    <property type="entry name" value="biotin_synthase_like"/>
    <property type="match status" value="1"/>
</dbReference>
<dbReference type="SMART" id="SM00876">
    <property type="entry name" value="BATS"/>
    <property type="match status" value="1"/>
</dbReference>
<dbReference type="SMART" id="SM00729">
    <property type="entry name" value="Elp3"/>
    <property type="match status" value="1"/>
</dbReference>
<dbReference type="SUPFAM" id="SSF102114">
    <property type="entry name" value="Radical SAM enzymes"/>
    <property type="match status" value="1"/>
</dbReference>
<dbReference type="PROSITE" id="PS51918">
    <property type="entry name" value="RADICAL_SAM"/>
    <property type="match status" value="1"/>
</dbReference>
<proteinExistence type="inferred from homology"/>